<keyword id="KW-0131">Cell cycle</keyword>
<keyword id="KW-0132">Cell division</keyword>
<keyword id="KW-0963">Cytoplasm</keyword>
<keyword id="KW-0717">Septation</keyword>
<evidence type="ECO:0000255" key="1">
    <source>
        <dbReference type="HAMAP-Rule" id="MF_01092"/>
    </source>
</evidence>
<name>ZAPD_ENT38</name>
<sequence length="247" mass="28511">MSSHILFEHPLNEKMRTWLRIEFLIQQMSFHLPIAEHATALHFFRNVGDLLDVIERGDVRTELLKELERQQRKLQGWAEVPGVDQNRIDSIRLQLKQSSTILMAAPRVGQFLREDRLIGLVRQRLSIPGGCCSFDLPTLHIWLHMSQEQRDAQVKNWMGSLEPMNQALTLILDLVRNSAPFRKQTSLNGFYHDNGDDADLLRLQLSLGDQLYPQISGHKSRFAIRFMPLDSENGSVPERLDFELACC</sequence>
<proteinExistence type="inferred from homology"/>
<gene>
    <name evidence="1" type="primary">zapD</name>
    <name type="ordered locus">Ent638_0647</name>
</gene>
<dbReference type="EMBL" id="CP000653">
    <property type="protein sequence ID" value="ABP59334.1"/>
    <property type="molecule type" value="Genomic_DNA"/>
</dbReference>
<dbReference type="RefSeq" id="WP_012016055.1">
    <property type="nucleotide sequence ID" value="NC_009436.1"/>
</dbReference>
<dbReference type="SMR" id="A4W6K4"/>
<dbReference type="STRING" id="399742.Ent638_0647"/>
<dbReference type="KEGG" id="ent:Ent638_0647"/>
<dbReference type="eggNOG" id="COG4582">
    <property type="taxonomic scope" value="Bacteria"/>
</dbReference>
<dbReference type="HOGENOM" id="CLU_076303_0_0_6"/>
<dbReference type="OrthoDB" id="5294622at2"/>
<dbReference type="Proteomes" id="UP000000230">
    <property type="component" value="Chromosome"/>
</dbReference>
<dbReference type="GO" id="GO:0032153">
    <property type="term" value="C:cell division site"/>
    <property type="evidence" value="ECO:0007669"/>
    <property type="project" value="TreeGrafter"/>
</dbReference>
<dbReference type="GO" id="GO:0005737">
    <property type="term" value="C:cytoplasm"/>
    <property type="evidence" value="ECO:0007669"/>
    <property type="project" value="UniProtKB-SubCell"/>
</dbReference>
<dbReference type="GO" id="GO:0000917">
    <property type="term" value="P:division septum assembly"/>
    <property type="evidence" value="ECO:0007669"/>
    <property type="project" value="UniProtKB-KW"/>
</dbReference>
<dbReference type="GO" id="GO:0043093">
    <property type="term" value="P:FtsZ-dependent cytokinesis"/>
    <property type="evidence" value="ECO:0007669"/>
    <property type="project" value="UniProtKB-UniRule"/>
</dbReference>
<dbReference type="FunFam" id="1.10.3900.10:FF:000001">
    <property type="entry name" value="Cell division protein ZapD"/>
    <property type="match status" value="1"/>
</dbReference>
<dbReference type="FunFam" id="2.60.440.10:FF:000001">
    <property type="entry name" value="Cell division protein ZapD"/>
    <property type="match status" value="1"/>
</dbReference>
<dbReference type="Gene3D" id="1.10.3900.10">
    <property type="entry name" value="YacF-like"/>
    <property type="match status" value="1"/>
</dbReference>
<dbReference type="Gene3D" id="2.60.440.10">
    <property type="entry name" value="YacF-like domains"/>
    <property type="match status" value="1"/>
</dbReference>
<dbReference type="HAMAP" id="MF_01092">
    <property type="entry name" value="ZapD"/>
    <property type="match status" value="1"/>
</dbReference>
<dbReference type="InterPro" id="IPR009777">
    <property type="entry name" value="ZapD"/>
</dbReference>
<dbReference type="InterPro" id="IPR027462">
    <property type="entry name" value="ZapD_C"/>
</dbReference>
<dbReference type="InterPro" id="IPR036268">
    <property type="entry name" value="ZapD_sf"/>
</dbReference>
<dbReference type="NCBIfam" id="NF003653">
    <property type="entry name" value="PRK05287.1-1"/>
    <property type="match status" value="1"/>
</dbReference>
<dbReference type="NCBIfam" id="NF003655">
    <property type="entry name" value="PRK05287.1-3"/>
    <property type="match status" value="1"/>
</dbReference>
<dbReference type="PANTHER" id="PTHR39455">
    <property type="entry name" value="CELL DIVISION PROTEIN ZAPD"/>
    <property type="match status" value="1"/>
</dbReference>
<dbReference type="PANTHER" id="PTHR39455:SF1">
    <property type="entry name" value="CELL DIVISION PROTEIN ZAPD"/>
    <property type="match status" value="1"/>
</dbReference>
<dbReference type="Pfam" id="PF07072">
    <property type="entry name" value="ZapD"/>
    <property type="match status" value="1"/>
</dbReference>
<dbReference type="SUPFAM" id="SSF160950">
    <property type="entry name" value="YacF-like"/>
    <property type="match status" value="1"/>
</dbReference>
<feature type="chain" id="PRO_1000064911" description="Cell division protein ZapD">
    <location>
        <begin position="1"/>
        <end position="247"/>
    </location>
</feature>
<organism>
    <name type="scientific">Enterobacter sp. (strain 638)</name>
    <dbReference type="NCBI Taxonomy" id="399742"/>
    <lineage>
        <taxon>Bacteria</taxon>
        <taxon>Pseudomonadati</taxon>
        <taxon>Pseudomonadota</taxon>
        <taxon>Gammaproteobacteria</taxon>
        <taxon>Enterobacterales</taxon>
        <taxon>Enterobacteriaceae</taxon>
        <taxon>Enterobacter</taxon>
    </lineage>
</organism>
<reference key="1">
    <citation type="journal article" date="2010" name="PLoS Genet.">
        <title>Genome sequence of the plant growth promoting endophytic bacterium Enterobacter sp. 638.</title>
        <authorList>
            <person name="Taghavi S."/>
            <person name="van der Lelie D."/>
            <person name="Hoffman A."/>
            <person name="Zhang Y.B."/>
            <person name="Walla M.D."/>
            <person name="Vangronsveld J."/>
            <person name="Newman L."/>
            <person name="Monchy S."/>
        </authorList>
    </citation>
    <scope>NUCLEOTIDE SEQUENCE [LARGE SCALE GENOMIC DNA]</scope>
    <source>
        <strain>638</strain>
    </source>
</reference>
<protein>
    <recommendedName>
        <fullName evidence="1">Cell division protein ZapD</fullName>
    </recommendedName>
    <alternativeName>
        <fullName evidence="1">Z ring-associated protein D</fullName>
    </alternativeName>
</protein>
<comment type="function">
    <text evidence="1">Cell division factor that enhances FtsZ-ring assembly. Directly interacts with FtsZ and promotes bundling of FtsZ protofilaments, with a reduction in FtsZ GTPase activity.</text>
</comment>
<comment type="subunit">
    <text evidence="1">Interacts with FtsZ.</text>
</comment>
<comment type="subcellular location">
    <subcellularLocation>
        <location evidence="1">Cytoplasm</location>
    </subcellularLocation>
    <text evidence="1">Localizes to mid-cell in an FtsZ-dependent manner.</text>
</comment>
<comment type="similarity">
    <text evidence="1">Belongs to the ZapD family.</text>
</comment>
<accession>A4W6K4</accession>